<accession>P49663</accession>
<feature type="chain" id="PRO_0000208871" description="Lysozyme C">
    <location>
        <begin position="1"/>
        <end position="130"/>
    </location>
</feature>
<feature type="domain" description="C-type lysozyme" evidence="2">
    <location>
        <begin position="2"/>
        <end position="130"/>
    </location>
</feature>
<feature type="active site" evidence="2">
    <location>
        <position position="36"/>
    </location>
</feature>
<feature type="active site" evidence="2">
    <location>
        <position position="53"/>
    </location>
</feature>
<feature type="disulfide bond" evidence="2">
    <location>
        <begin position="7"/>
        <end position="128"/>
    </location>
</feature>
<feature type="disulfide bond" evidence="2">
    <location>
        <begin position="31"/>
        <end position="116"/>
    </location>
</feature>
<feature type="disulfide bond" evidence="2">
    <location>
        <begin position="65"/>
        <end position="81"/>
    </location>
</feature>
<feature type="disulfide bond" evidence="2">
    <location>
        <begin position="77"/>
        <end position="95"/>
    </location>
</feature>
<reference key="1">
    <citation type="submission" date="1993-10" db="PIR data bank">
        <authorList>
            <person name="Araki T."/>
            <person name="Kuramoto M."/>
            <person name="Torikata T."/>
        </authorList>
    </citation>
    <scope>PROTEIN SEQUENCE</scope>
</reference>
<dbReference type="EC" id="3.2.1.17"/>
<dbReference type="PIR" id="JU0178">
    <property type="entry name" value="JU0178"/>
</dbReference>
<dbReference type="SMR" id="P49663"/>
<dbReference type="CAZy" id="GH22">
    <property type="family name" value="Glycoside Hydrolase Family 22"/>
</dbReference>
<dbReference type="GO" id="GO:0005576">
    <property type="term" value="C:extracellular region"/>
    <property type="evidence" value="ECO:0007669"/>
    <property type="project" value="UniProtKB-SubCell"/>
</dbReference>
<dbReference type="GO" id="GO:0003796">
    <property type="term" value="F:lysozyme activity"/>
    <property type="evidence" value="ECO:0007669"/>
    <property type="project" value="UniProtKB-EC"/>
</dbReference>
<dbReference type="GO" id="GO:0050829">
    <property type="term" value="P:defense response to Gram-negative bacterium"/>
    <property type="evidence" value="ECO:0007669"/>
    <property type="project" value="TreeGrafter"/>
</dbReference>
<dbReference type="GO" id="GO:0050830">
    <property type="term" value="P:defense response to Gram-positive bacterium"/>
    <property type="evidence" value="ECO:0007669"/>
    <property type="project" value="TreeGrafter"/>
</dbReference>
<dbReference type="GO" id="GO:0031640">
    <property type="term" value="P:killing of cells of another organism"/>
    <property type="evidence" value="ECO:0007669"/>
    <property type="project" value="UniProtKB-KW"/>
</dbReference>
<dbReference type="CDD" id="cd16897">
    <property type="entry name" value="LYZ_C"/>
    <property type="match status" value="1"/>
</dbReference>
<dbReference type="FunFam" id="1.10.530.10:FF:000001">
    <property type="entry name" value="Lysozyme C"/>
    <property type="match status" value="1"/>
</dbReference>
<dbReference type="Gene3D" id="1.10.530.10">
    <property type="match status" value="1"/>
</dbReference>
<dbReference type="InterPro" id="IPR001916">
    <property type="entry name" value="Glyco_hydro_22"/>
</dbReference>
<dbReference type="InterPro" id="IPR019799">
    <property type="entry name" value="Glyco_hydro_22_CS"/>
</dbReference>
<dbReference type="InterPro" id="IPR000974">
    <property type="entry name" value="Glyco_hydro_22_lys"/>
</dbReference>
<dbReference type="InterPro" id="IPR023346">
    <property type="entry name" value="Lysozyme-like_dom_sf"/>
</dbReference>
<dbReference type="PANTHER" id="PTHR11407">
    <property type="entry name" value="LYSOZYME C"/>
    <property type="match status" value="1"/>
</dbReference>
<dbReference type="PANTHER" id="PTHR11407:SF28">
    <property type="entry name" value="LYSOZYME C"/>
    <property type="match status" value="1"/>
</dbReference>
<dbReference type="Pfam" id="PF00062">
    <property type="entry name" value="Lys"/>
    <property type="match status" value="1"/>
</dbReference>
<dbReference type="PRINTS" id="PR00137">
    <property type="entry name" value="LYSOZYME"/>
</dbReference>
<dbReference type="PRINTS" id="PR00135">
    <property type="entry name" value="LYZLACT"/>
</dbReference>
<dbReference type="SMART" id="SM00263">
    <property type="entry name" value="LYZ1"/>
    <property type="match status" value="1"/>
</dbReference>
<dbReference type="SUPFAM" id="SSF53955">
    <property type="entry name" value="Lysozyme-like"/>
    <property type="match status" value="1"/>
</dbReference>
<dbReference type="PROSITE" id="PS00128">
    <property type="entry name" value="GLYCOSYL_HYDROL_F22_1"/>
    <property type="match status" value="1"/>
</dbReference>
<dbReference type="PROSITE" id="PS51348">
    <property type="entry name" value="GLYCOSYL_HYDROL_F22_2"/>
    <property type="match status" value="1"/>
</dbReference>
<evidence type="ECO:0000250" key="1"/>
<evidence type="ECO:0000255" key="2">
    <source>
        <dbReference type="PROSITE-ProRule" id="PRU00680"/>
    </source>
</evidence>
<gene>
    <name type="primary">LYZ</name>
</gene>
<name>LYSC_PHAVE</name>
<sequence length="130" mass="14314">GKVYGRCELAAAMKRMGLDNYRGYSLGNWVCAAKFESNFNTGATNRNTDGSTDYGILQINSRWWCNDGRTPGSKNLCHIPCSALLSSDITASVNCAKKIVSDGDGMNAWVAWRKHCKGTDVNVWIRGCRL</sequence>
<comment type="function">
    <text evidence="2">Lysozymes have primarily a bacteriolytic function; those in tissues and body fluids are associated with the monocyte-macrophage system and enhance the activity of immunoagents.</text>
</comment>
<comment type="catalytic activity">
    <reaction>
        <text>Hydrolysis of (1-&gt;4)-beta-linkages between N-acetylmuramic acid and N-acetyl-D-glucosamine residues in a peptidoglycan and between N-acetyl-D-glucosamine residues in chitodextrins.</text>
        <dbReference type="EC" id="3.2.1.17"/>
    </reaction>
</comment>
<comment type="subunit">
    <text evidence="1">Monomer.</text>
</comment>
<comment type="subcellular location">
    <subcellularLocation>
        <location>Secreted</location>
    </subcellularLocation>
</comment>
<comment type="miscellaneous">
    <text>Lysozyme C is capable of both hydrolysis and transglycosylation; it also shows a slight esterase activity. It acts rapidly on both peptide-substituted and unsubstituted peptidoglycan, and slowly on chitin oligosaccharides.</text>
</comment>
<comment type="similarity">
    <text evidence="2">Belongs to the glycosyl hydrolase 22 family.</text>
</comment>
<keyword id="KW-0929">Antimicrobial</keyword>
<keyword id="KW-0081">Bacteriolytic enzyme</keyword>
<keyword id="KW-0903">Direct protein sequencing</keyword>
<keyword id="KW-1015">Disulfide bond</keyword>
<keyword id="KW-0326">Glycosidase</keyword>
<keyword id="KW-0378">Hydrolase</keyword>
<keyword id="KW-0964">Secreted</keyword>
<protein>
    <recommendedName>
        <fullName>Lysozyme C</fullName>
        <ecNumber>3.2.1.17</ecNumber>
    </recommendedName>
    <alternativeName>
        <fullName>1,4-beta-N-acetylmuramidase</fullName>
    </alternativeName>
</protein>
<organism>
    <name type="scientific">Phasianus versicolor</name>
    <name type="common">Green pheasant</name>
    <dbReference type="NCBI Taxonomy" id="9055"/>
    <lineage>
        <taxon>Eukaryota</taxon>
        <taxon>Metazoa</taxon>
        <taxon>Chordata</taxon>
        <taxon>Craniata</taxon>
        <taxon>Vertebrata</taxon>
        <taxon>Euteleostomi</taxon>
        <taxon>Archelosauria</taxon>
        <taxon>Archosauria</taxon>
        <taxon>Dinosauria</taxon>
        <taxon>Saurischia</taxon>
        <taxon>Theropoda</taxon>
        <taxon>Coelurosauria</taxon>
        <taxon>Aves</taxon>
        <taxon>Neognathae</taxon>
        <taxon>Galloanserae</taxon>
        <taxon>Galliformes</taxon>
        <taxon>Phasianidae</taxon>
        <taxon>Phasianinae</taxon>
        <taxon>Phasianus</taxon>
    </lineage>
</organism>
<proteinExistence type="evidence at protein level"/>